<accession>B2G6J1</accession>
<proteinExistence type="inferred from homology"/>
<protein>
    <recommendedName>
        <fullName evidence="1">NAD kinase</fullName>
        <ecNumber evidence="1">2.7.1.23</ecNumber>
    </recommendedName>
    <alternativeName>
        <fullName evidence="1">ATP-dependent NAD kinase</fullName>
    </alternativeName>
</protein>
<keyword id="KW-0067">ATP-binding</keyword>
<keyword id="KW-0963">Cytoplasm</keyword>
<keyword id="KW-0418">Kinase</keyword>
<keyword id="KW-0520">NAD</keyword>
<keyword id="KW-0521">NADP</keyword>
<keyword id="KW-0547">Nucleotide-binding</keyword>
<keyword id="KW-0808">Transferase</keyword>
<comment type="function">
    <text evidence="1">Involved in the regulation of the intracellular balance of NAD and NADP, and is a key enzyme in the biosynthesis of NADP. Catalyzes specifically the phosphorylation on 2'-hydroxyl of the adenosine moiety of NAD to yield NADP.</text>
</comment>
<comment type="catalytic activity">
    <reaction evidence="1">
        <text>NAD(+) + ATP = ADP + NADP(+) + H(+)</text>
        <dbReference type="Rhea" id="RHEA:18629"/>
        <dbReference type="ChEBI" id="CHEBI:15378"/>
        <dbReference type="ChEBI" id="CHEBI:30616"/>
        <dbReference type="ChEBI" id="CHEBI:57540"/>
        <dbReference type="ChEBI" id="CHEBI:58349"/>
        <dbReference type="ChEBI" id="CHEBI:456216"/>
        <dbReference type="EC" id="2.7.1.23"/>
    </reaction>
</comment>
<comment type="cofactor">
    <cofactor evidence="1">
        <name>a divalent metal cation</name>
        <dbReference type="ChEBI" id="CHEBI:60240"/>
    </cofactor>
</comment>
<comment type="subcellular location">
    <subcellularLocation>
        <location evidence="1">Cytoplasm</location>
    </subcellularLocation>
</comment>
<comment type="similarity">
    <text evidence="1">Belongs to the NAD kinase family.</text>
</comment>
<evidence type="ECO:0000255" key="1">
    <source>
        <dbReference type="HAMAP-Rule" id="MF_00361"/>
    </source>
</evidence>
<dbReference type="EC" id="2.7.1.23" evidence="1"/>
<dbReference type="EMBL" id="AP007281">
    <property type="protein sequence ID" value="BAG25073.1"/>
    <property type="molecule type" value="Genomic_DNA"/>
</dbReference>
<dbReference type="RefSeq" id="WP_003666883.1">
    <property type="nucleotide sequence ID" value="NC_010609.1"/>
</dbReference>
<dbReference type="SMR" id="B2G6J1"/>
<dbReference type="KEGG" id="lrf:LAR_0557"/>
<dbReference type="HOGENOM" id="CLU_008831_0_3_9"/>
<dbReference type="GO" id="GO:0005737">
    <property type="term" value="C:cytoplasm"/>
    <property type="evidence" value="ECO:0007669"/>
    <property type="project" value="UniProtKB-SubCell"/>
</dbReference>
<dbReference type="GO" id="GO:0005524">
    <property type="term" value="F:ATP binding"/>
    <property type="evidence" value="ECO:0007669"/>
    <property type="project" value="UniProtKB-KW"/>
</dbReference>
<dbReference type="GO" id="GO:0046872">
    <property type="term" value="F:metal ion binding"/>
    <property type="evidence" value="ECO:0007669"/>
    <property type="project" value="UniProtKB-UniRule"/>
</dbReference>
<dbReference type="GO" id="GO:0051287">
    <property type="term" value="F:NAD binding"/>
    <property type="evidence" value="ECO:0007669"/>
    <property type="project" value="UniProtKB-ARBA"/>
</dbReference>
<dbReference type="GO" id="GO:0003951">
    <property type="term" value="F:NAD+ kinase activity"/>
    <property type="evidence" value="ECO:0007669"/>
    <property type="project" value="UniProtKB-UniRule"/>
</dbReference>
<dbReference type="GO" id="GO:0019674">
    <property type="term" value="P:NAD metabolic process"/>
    <property type="evidence" value="ECO:0007669"/>
    <property type="project" value="InterPro"/>
</dbReference>
<dbReference type="GO" id="GO:0006741">
    <property type="term" value="P:NADP biosynthetic process"/>
    <property type="evidence" value="ECO:0007669"/>
    <property type="project" value="UniProtKB-UniRule"/>
</dbReference>
<dbReference type="Gene3D" id="3.40.50.10330">
    <property type="entry name" value="Probable inorganic polyphosphate/atp-NAD kinase, domain 1"/>
    <property type="match status" value="1"/>
</dbReference>
<dbReference type="Gene3D" id="2.60.200.30">
    <property type="entry name" value="Probable inorganic polyphosphate/atp-NAD kinase, domain 2"/>
    <property type="match status" value="1"/>
</dbReference>
<dbReference type="HAMAP" id="MF_00361">
    <property type="entry name" value="NAD_kinase"/>
    <property type="match status" value="1"/>
</dbReference>
<dbReference type="InterPro" id="IPR017438">
    <property type="entry name" value="ATP-NAD_kinase_N"/>
</dbReference>
<dbReference type="InterPro" id="IPR017437">
    <property type="entry name" value="ATP-NAD_kinase_PpnK-typ_C"/>
</dbReference>
<dbReference type="InterPro" id="IPR016064">
    <property type="entry name" value="NAD/diacylglycerol_kinase_sf"/>
</dbReference>
<dbReference type="InterPro" id="IPR002504">
    <property type="entry name" value="NADK"/>
</dbReference>
<dbReference type="NCBIfam" id="NF003424">
    <property type="entry name" value="PRK04885.1"/>
    <property type="match status" value="1"/>
</dbReference>
<dbReference type="PANTHER" id="PTHR20275">
    <property type="entry name" value="NAD KINASE"/>
    <property type="match status" value="1"/>
</dbReference>
<dbReference type="PANTHER" id="PTHR20275:SF0">
    <property type="entry name" value="NAD KINASE"/>
    <property type="match status" value="1"/>
</dbReference>
<dbReference type="Pfam" id="PF01513">
    <property type="entry name" value="NAD_kinase"/>
    <property type="match status" value="1"/>
</dbReference>
<dbReference type="Pfam" id="PF20143">
    <property type="entry name" value="NAD_kinase_C"/>
    <property type="match status" value="1"/>
</dbReference>
<dbReference type="SUPFAM" id="SSF111331">
    <property type="entry name" value="NAD kinase/diacylglycerol kinase-like"/>
    <property type="match status" value="1"/>
</dbReference>
<gene>
    <name evidence="1" type="primary">nadK</name>
    <name type="ordered locus">LAR_0557</name>
</gene>
<feature type="chain" id="PRO_1000120870" description="NAD kinase">
    <location>
        <begin position="1"/>
        <end position="270"/>
    </location>
</feature>
<feature type="active site" description="Proton acceptor" evidence="1">
    <location>
        <position position="45"/>
    </location>
</feature>
<feature type="binding site" evidence="1">
    <location>
        <begin position="45"/>
        <end position="46"/>
    </location>
    <ligand>
        <name>NAD(+)</name>
        <dbReference type="ChEBI" id="CHEBI:57540"/>
    </ligand>
</feature>
<feature type="binding site" evidence="1">
    <location>
        <begin position="121"/>
        <end position="122"/>
    </location>
    <ligand>
        <name>NAD(+)</name>
        <dbReference type="ChEBI" id="CHEBI:57540"/>
    </ligand>
</feature>
<feature type="binding site" evidence="1">
    <location>
        <position position="147"/>
    </location>
    <ligand>
        <name>NAD(+)</name>
        <dbReference type="ChEBI" id="CHEBI:57540"/>
    </ligand>
</feature>
<feature type="binding site" evidence="1">
    <location>
        <position position="149"/>
    </location>
    <ligand>
        <name>NAD(+)</name>
        <dbReference type="ChEBI" id="CHEBI:57540"/>
    </ligand>
</feature>
<feature type="binding site" evidence="1">
    <location>
        <begin position="160"/>
        <end position="165"/>
    </location>
    <ligand>
        <name>NAD(+)</name>
        <dbReference type="ChEBI" id="CHEBI:57540"/>
    </ligand>
</feature>
<feature type="binding site" evidence="1">
    <location>
        <position position="184"/>
    </location>
    <ligand>
        <name>NAD(+)</name>
        <dbReference type="ChEBI" id="CHEBI:57540"/>
    </ligand>
</feature>
<sequence>MRIGIYNNETAESQRVTKVLKTEMKRAGLTYVEKNPEVVITIGGDGTLLSAFHHYQKDLNNIRFVGIHTGHLGFYTDWRSFEIDDLVDSLVKDSGQAVSYPLLDMKATYSDGQIENYIALNESTIRNVTRTMVCDVFINNHLFENFRGDGLCISTPTGSTAYNKSVGGAIVDPNSVGFQLAEMASLNNRVFRTLGSPIIFGADAELILRLRDENGHVLTCDRDQWMLKSEKERYLTELSYKVSKQRIYFAQYRHNNFWNRVKDSFIGGVH</sequence>
<organism>
    <name type="scientific">Limosilactobacillus reuteri subsp. reuteri (strain JCM 1112)</name>
    <name type="common">Lactobacillus reuteri</name>
    <dbReference type="NCBI Taxonomy" id="557433"/>
    <lineage>
        <taxon>Bacteria</taxon>
        <taxon>Bacillati</taxon>
        <taxon>Bacillota</taxon>
        <taxon>Bacilli</taxon>
        <taxon>Lactobacillales</taxon>
        <taxon>Lactobacillaceae</taxon>
        <taxon>Limosilactobacillus</taxon>
    </lineage>
</organism>
<reference key="1">
    <citation type="journal article" date="2008" name="DNA Res.">
        <title>Comparative genome analysis of Lactobacillus reuteri and Lactobacillus fermentum reveal a genomic island for reuterin and cobalamin production.</title>
        <authorList>
            <person name="Morita H."/>
            <person name="Toh H."/>
            <person name="Fukuda S."/>
            <person name="Horikawa H."/>
            <person name="Oshima K."/>
            <person name="Suzuki T."/>
            <person name="Murakami M."/>
            <person name="Hisamatsu S."/>
            <person name="Kato Y."/>
            <person name="Takizawa T."/>
            <person name="Fukuoka H."/>
            <person name="Yoshimura T."/>
            <person name="Itoh K."/>
            <person name="O'Sullivan D.J."/>
            <person name="McKay L.L."/>
            <person name="Ohno H."/>
            <person name="Kikuchi J."/>
            <person name="Masaoka T."/>
            <person name="Hattori M."/>
        </authorList>
    </citation>
    <scope>NUCLEOTIDE SEQUENCE [LARGE SCALE GENOMIC DNA]</scope>
    <source>
        <strain>JCM 1112</strain>
    </source>
</reference>
<name>NADK_LIMRJ</name>